<accession>O43913</accession>
<accession>A4D0P8</accession>
<accession>O60590</accession>
<accession>O95268</accession>
<dbReference type="EMBL" id="AF047599">
    <property type="protein sequence ID" value="AAC80283.1"/>
    <property type="molecule type" value="mRNA"/>
</dbReference>
<dbReference type="EMBL" id="U92538">
    <property type="protein sequence ID" value="AAC51933.1"/>
    <property type="molecule type" value="mRNA"/>
</dbReference>
<dbReference type="EMBL" id="AF049127">
    <property type="protein sequence ID" value="AAC63972.1"/>
    <property type="molecule type" value="mRNA"/>
</dbReference>
<dbReference type="EMBL" id="AF081459">
    <property type="protein sequence ID" value="AAC64401.1"/>
    <property type="molecule type" value="mRNA"/>
</dbReference>
<dbReference type="EMBL" id="AC002067">
    <property type="status" value="NOT_ANNOTATED_CDS"/>
    <property type="molecule type" value="Genomic_DNA"/>
</dbReference>
<dbReference type="EMBL" id="AC007393">
    <property type="status" value="NOT_ANNOTATED_CDS"/>
    <property type="molecule type" value="Genomic_DNA"/>
</dbReference>
<dbReference type="EMBL" id="CH236947">
    <property type="protein sequence ID" value="EAL24409.1"/>
    <property type="molecule type" value="Genomic_DNA"/>
</dbReference>
<dbReference type="EMBL" id="CH471070">
    <property type="protein sequence ID" value="EAW83341.1"/>
    <property type="molecule type" value="Genomic_DNA"/>
</dbReference>
<dbReference type="EMBL" id="BC023652">
    <property type="protein sequence ID" value="AAH23652.1"/>
    <property type="molecule type" value="mRNA"/>
</dbReference>
<dbReference type="CCDS" id="CCDS47681.1">
    <molecule id="O43913-2"/>
</dbReference>
<dbReference type="CCDS" id="CCDS5734.1">
    <molecule id="O43913-1"/>
</dbReference>
<dbReference type="RefSeq" id="NP_002544.1">
    <molecule id="O43913-1"/>
    <property type="nucleotide sequence ID" value="NM_002553.4"/>
</dbReference>
<dbReference type="RefSeq" id="NP_859531.1">
    <molecule id="O43913-2"/>
    <property type="nucleotide sequence ID" value="NM_181747.4"/>
</dbReference>
<dbReference type="PDB" id="5UJ7">
    <property type="method" value="X-ray"/>
    <property type="resolution" value="3.39 A"/>
    <property type="chains" value="E/F=1-284"/>
</dbReference>
<dbReference type="PDB" id="5UJM">
    <property type="method" value="EM"/>
    <property type="resolution" value="18.00 A"/>
    <property type="chains" value="E=1-435"/>
</dbReference>
<dbReference type="PDB" id="7CTE">
    <property type="method" value="EM"/>
    <property type="resolution" value="3.80 A"/>
    <property type="chains" value="E=1-435"/>
</dbReference>
<dbReference type="PDB" id="7CTF">
    <property type="method" value="EM"/>
    <property type="resolution" value="4.80 A"/>
    <property type="chains" value="E=1-435"/>
</dbReference>
<dbReference type="PDB" id="7CTG">
    <property type="method" value="EM"/>
    <property type="resolution" value="5.00 A"/>
    <property type="chains" value="E=1-435"/>
</dbReference>
<dbReference type="PDB" id="7JPO">
    <property type="method" value="EM"/>
    <property type="resolution" value="3.20 A"/>
    <property type="chains" value="E=1-435"/>
</dbReference>
<dbReference type="PDB" id="7JPP">
    <property type="method" value="EM"/>
    <property type="resolution" value="3.70 A"/>
    <property type="chains" value="E=1-435"/>
</dbReference>
<dbReference type="PDB" id="7JPQ">
    <property type="method" value="EM"/>
    <property type="resolution" value="3.50 A"/>
    <property type="chains" value="E=1-435"/>
</dbReference>
<dbReference type="PDB" id="7JPR">
    <property type="method" value="EM"/>
    <property type="resolution" value="4.00 A"/>
    <property type="chains" value="E=1-435"/>
</dbReference>
<dbReference type="PDB" id="7JPS">
    <property type="method" value="EM"/>
    <property type="resolution" value="4.40 A"/>
    <property type="chains" value="E=1-435"/>
</dbReference>
<dbReference type="PDB" id="8RWV">
    <property type="method" value="EM"/>
    <property type="resolution" value="6.68 A"/>
    <property type="chains" value="E=1-435"/>
</dbReference>
<dbReference type="PDB" id="8S0C">
    <property type="method" value="EM"/>
    <property type="resolution" value="4.00 A"/>
    <property type="chains" value="E=1-435"/>
</dbReference>
<dbReference type="PDB" id="8S0D">
    <property type="method" value="EM"/>
    <property type="resolution" value="3.60 A"/>
    <property type="chains" value="E=1-435"/>
</dbReference>
<dbReference type="PDB" id="8S0E">
    <property type="method" value="EM"/>
    <property type="resolution" value="3.80 A"/>
    <property type="chains" value="E=1-435"/>
</dbReference>
<dbReference type="PDB" id="8S0F">
    <property type="method" value="EM"/>
    <property type="resolution" value="4.10 A"/>
    <property type="chains" value="E=1-435"/>
</dbReference>
<dbReference type="PDBsum" id="5UJ7"/>
<dbReference type="PDBsum" id="5UJM"/>
<dbReference type="PDBsum" id="7CTE"/>
<dbReference type="PDBsum" id="7CTF"/>
<dbReference type="PDBsum" id="7CTG"/>
<dbReference type="PDBsum" id="7JPO"/>
<dbReference type="PDBsum" id="7JPP"/>
<dbReference type="PDBsum" id="7JPQ"/>
<dbReference type="PDBsum" id="7JPR"/>
<dbReference type="PDBsum" id="7JPS"/>
<dbReference type="PDBsum" id="8RWV"/>
<dbReference type="PDBsum" id="8S0C"/>
<dbReference type="PDBsum" id="8S0D"/>
<dbReference type="PDBsum" id="8S0E"/>
<dbReference type="PDBsum" id="8S0F"/>
<dbReference type="EMDB" id="EMD-19566"/>
<dbReference type="EMDB" id="EMD-19621"/>
<dbReference type="EMDB" id="EMD-19622"/>
<dbReference type="EMDB" id="EMD-19623"/>
<dbReference type="EMDB" id="EMD-19624"/>
<dbReference type="EMDB" id="EMD-22417"/>
<dbReference type="EMDB" id="EMD-22418"/>
<dbReference type="EMDB" id="EMD-22419"/>
<dbReference type="EMDB" id="EMD-22420"/>
<dbReference type="EMDB" id="EMD-22421"/>
<dbReference type="EMDB" id="EMD-30462"/>
<dbReference type="EMDB" id="EMD-30463"/>
<dbReference type="EMDB" id="EMD-30464"/>
<dbReference type="SMR" id="O43913"/>
<dbReference type="BioGRID" id="111043">
    <property type="interactions" value="95"/>
</dbReference>
<dbReference type="ComplexPortal" id="CPX-1880">
    <property type="entry name" value="Nuclear origin recognition complex"/>
</dbReference>
<dbReference type="CORUM" id="O43913"/>
<dbReference type="DIP" id="DIP-29691N"/>
<dbReference type="FunCoup" id="O43913">
    <property type="interactions" value="4358"/>
</dbReference>
<dbReference type="IntAct" id="O43913">
    <property type="interactions" value="63"/>
</dbReference>
<dbReference type="MINT" id="O43913"/>
<dbReference type="STRING" id="9606.ENSP00000297431"/>
<dbReference type="GlyGen" id="O43913">
    <property type="glycosylation" value="1 site, 1 O-linked glycan (1 site)"/>
</dbReference>
<dbReference type="iPTMnet" id="O43913"/>
<dbReference type="PhosphoSitePlus" id="O43913"/>
<dbReference type="SwissPalm" id="O43913"/>
<dbReference type="BioMuta" id="ORC5"/>
<dbReference type="jPOST" id="O43913"/>
<dbReference type="MassIVE" id="O43913"/>
<dbReference type="PaxDb" id="9606-ENSP00000297431"/>
<dbReference type="PeptideAtlas" id="O43913"/>
<dbReference type="ProteomicsDB" id="49227">
    <molecule id="O43913-1"/>
</dbReference>
<dbReference type="ProteomicsDB" id="49228">
    <molecule id="O43913-2"/>
</dbReference>
<dbReference type="Pumba" id="O43913"/>
<dbReference type="Antibodypedia" id="31233">
    <property type="antibodies" value="92 antibodies from 24 providers"/>
</dbReference>
<dbReference type="DNASU" id="5001"/>
<dbReference type="Ensembl" id="ENST00000297431.9">
    <molecule id="O43913-1"/>
    <property type="protein sequence ID" value="ENSP00000297431.4"/>
    <property type="gene ID" value="ENSG00000164815.11"/>
</dbReference>
<dbReference type="Ensembl" id="ENST00000447452.6">
    <molecule id="O43913-2"/>
    <property type="protein sequence ID" value="ENSP00000395747.2"/>
    <property type="gene ID" value="ENSG00000164815.11"/>
</dbReference>
<dbReference type="GeneID" id="5001"/>
<dbReference type="KEGG" id="hsa:5001"/>
<dbReference type="MANE-Select" id="ENST00000297431.9">
    <property type="protein sequence ID" value="ENSP00000297431.4"/>
    <property type="RefSeq nucleotide sequence ID" value="NM_002553.4"/>
    <property type="RefSeq protein sequence ID" value="NP_002544.1"/>
</dbReference>
<dbReference type="UCSC" id="uc003vcb.3">
    <molecule id="O43913-1"/>
    <property type="organism name" value="human"/>
</dbReference>
<dbReference type="AGR" id="HGNC:8491"/>
<dbReference type="CTD" id="5001"/>
<dbReference type="DisGeNET" id="5001"/>
<dbReference type="GeneCards" id="ORC5"/>
<dbReference type="HGNC" id="HGNC:8491">
    <property type="gene designation" value="ORC5"/>
</dbReference>
<dbReference type="HPA" id="ENSG00000164815">
    <property type="expression patterns" value="Low tissue specificity"/>
</dbReference>
<dbReference type="MIM" id="602331">
    <property type="type" value="gene"/>
</dbReference>
<dbReference type="neXtProt" id="NX_O43913"/>
<dbReference type="OpenTargets" id="ENSG00000164815"/>
<dbReference type="PharmGKB" id="PA32812"/>
<dbReference type="VEuPathDB" id="HostDB:ENSG00000164815"/>
<dbReference type="eggNOG" id="KOG2543">
    <property type="taxonomic scope" value="Eukaryota"/>
</dbReference>
<dbReference type="GeneTree" id="ENSGT00390000009380"/>
<dbReference type="HOGENOM" id="CLU_028223_0_0_1"/>
<dbReference type="InParanoid" id="O43913"/>
<dbReference type="OMA" id="QLRRWHG"/>
<dbReference type="OrthoDB" id="365981at2759"/>
<dbReference type="PAN-GO" id="O43913">
    <property type="GO annotations" value="3 GO annotations based on evolutionary models"/>
</dbReference>
<dbReference type="PhylomeDB" id="O43913"/>
<dbReference type="TreeFam" id="TF101095"/>
<dbReference type="BRENDA" id="3.6.4.B8">
    <property type="organism ID" value="2681"/>
</dbReference>
<dbReference type="PathwayCommons" id="O43913"/>
<dbReference type="Reactome" id="R-HSA-113507">
    <property type="pathway name" value="E2F-enabled inhibition of pre-replication complex formation"/>
</dbReference>
<dbReference type="Reactome" id="R-HSA-176187">
    <property type="pathway name" value="Activation of ATR in response to replication stress"/>
</dbReference>
<dbReference type="Reactome" id="R-HSA-68616">
    <property type="pathway name" value="Assembly of the ORC complex at the origin of replication"/>
</dbReference>
<dbReference type="Reactome" id="R-HSA-68689">
    <property type="pathway name" value="CDC6 association with the ORC:origin complex"/>
</dbReference>
<dbReference type="Reactome" id="R-HSA-68867">
    <property type="pathway name" value="Assembly of the pre-replicative complex"/>
</dbReference>
<dbReference type="Reactome" id="R-HSA-68949">
    <property type="pathway name" value="Orc1 removal from chromatin"/>
</dbReference>
<dbReference type="Reactome" id="R-HSA-68962">
    <property type="pathway name" value="Activation of the pre-replicative complex"/>
</dbReference>
<dbReference type="SignaLink" id="O43913"/>
<dbReference type="SIGNOR" id="O43913"/>
<dbReference type="BioGRID-ORCS" id="5001">
    <property type="hits" value="462 hits in 1183 CRISPR screens"/>
</dbReference>
<dbReference type="ChiTaRS" id="ORC5">
    <property type="organism name" value="human"/>
</dbReference>
<dbReference type="GeneWiki" id="ORC5"/>
<dbReference type="GeneWiki" id="ORC5L"/>
<dbReference type="GenomeRNAi" id="5001"/>
<dbReference type="Pharos" id="O43913">
    <property type="development level" value="Tbio"/>
</dbReference>
<dbReference type="PRO" id="PR:O43913"/>
<dbReference type="Proteomes" id="UP000005640">
    <property type="component" value="Chromosome 7"/>
</dbReference>
<dbReference type="RNAct" id="O43913">
    <property type="molecule type" value="protein"/>
</dbReference>
<dbReference type="Bgee" id="ENSG00000164815">
    <property type="expression patterns" value="Expressed in secondary oocyte and 195 other cell types or tissues"/>
</dbReference>
<dbReference type="ExpressionAtlas" id="O43913">
    <property type="expression patterns" value="baseline and differential"/>
</dbReference>
<dbReference type="GO" id="GO:0000785">
    <property type="term" value="C:chromatin"/>
    <property type="evidence" value="ECO:0000314"/>
    <property type="project" value="UniProtKB"/>
</dbReference>
<dbReference type="GO" id="GO:0000781">
    <property type="term" value="C:chromosome, telomeric region"/>
    <property type="evidence" value="ECO:0007005"/>
    <property type="project" value="BHF-UCL"/>
</dbReference>
<dbReference type="GO" id="GO:0005829">
    <property type="term" value="C:cytosol"/>
    <property type="evidence" value="ECO:0000314"/>
    <property type="project" value="HPA"/>
</dbReference>
<dbReference type="GO" id="GO:0005664">
    <property type="term" value="C:nuclear origin of replication recognition complex"/>
    <property type="evidence" value="ECO:0000314"/>
    <property type="project" value="UniProtKB"/>
</dbReference>
<dbReference type="GO" id="GO:0005654">
    <property type="term" value="C:nucleoplasm"/>
    <property type="evidence" value="ECO:0000314"/>
    <property type="project" value="HPA"/>
</dbReference>
<dbReference type="GO" id="GO:0005634">
    <property type="term" value="C:nucleus"/>
    <property type="evidence" value="ECO:0000304"/>
    <property type="project" value="ProtInc"/>
</dbReference>
<dbReference type="GO" id="GO:0000808">
    <property type="term" value="C:origin recognition complex"/>
    <property type="evidence" value="ECO:0000314"/>
    <property type="project" value="UniProtKB"/>
</dbReference>
<dbReference type="GO" id="GO:0005524">
    <property type="term" value="F:ATP binding"/>
    <property type="evidence" value="ECO:0007669"/>
    <property type="project" value="UniProtKB-KW"/>
</dbReference>
<dbReference type="GO" id="GO:0003688">
    <property type="term" value="F:DNA replication origin binding"/>
    <property type="evidence" value="ECO:0000318"/>
    <property type="project" value="GO_Central"/>
</dbReference>
<dbReference type="GO" id="GO:0000166">
    <property type="term" value="F:nucleotide binding"/>
    <property type="evidence" value="ECO:0000304"/>
    <property type="project" value="ProtInc"/>
</dbReference>
<dbReference type="GO" id="GO:0006260">
    <property type="term" value="P:DNA replication"/>
    <property type="evidence" value="ECO:0000303"/>
    <property type="project" value="UniProtKB"/>
</dbReference>
<dbReference type="GO" id="GO:0006270">
    <property type="term" value="P:DNA replication initiation"/>
    <property type="evidence" value="ECO:0000314"/>
    <property type="project" value="ComplexPortal"/>
</dbReference>
<dbReference type="GO" id="GO:0006275">
    <property type="term" value="P:regulation of DNA replication"/>
    <property type="evidence" value="ECO:0000314"/>
    <property type="project" value="UniProtKB"/>
</dbReference>
<dbReference type="FunFam" id="3.40.50.300:FF:000673">
    <property type="entry name" value="Origin recognition complex subunit 5"/>
    <property type="match status" value="1"/>
</dbReference>
<dbReference type="Gene3D" id="3.40.50.300">
    <property type="entry name" value="P-loop containing nucleotide triphosphate hydrolases"/>
    <property type="match status" value="1"/>
</dbReference>
<dbReference type="InterPro" id="IPR041664">
    <property type="entry name" value="AAA_16"/>
</dbReference>
<dbReference type="InterPro" id="IPR020796">
    <property type="entry name" value="ORC5"/>
</dbReference>
<dbReference type="InterPro" id="IPR047088">
    <property type="entry name" value="ORC5_C"/>
</dbReference>
<dbReference type="InterPro" id="IPR048866">
    <property type="entry name" value="ORC5_lid"/>
</dbReference>
<dbReference type="InterPro" id="IPR027417">
    <property type="entry name" value="P-loop_NTPase"/>
</dbReference>
<dbReference type="PANTHER" id="PTHR12705">
    <property type="entry name" value="ORIGIN RECOGNITION COMPLEX SUBUNIT 5"/>
    <property type="match status" value="1"/>
</dbReference>
<dbReference type="PANTHER" id="PTHR12705:SF0">
    <property type="entry name" value="ORIGIN RECOGNITION COMPLEX SUBUNIT 5"/>
    <property type="match status" value="1"/>
</dbReference>
<dbReference type="Pfam" id="PF13191">
    <property type="entry name" value="AAA_16"/>
    <property type="match status" value="1"/>
</dbReference>
<dbReference type="Pfam" id="PF14630">
    <property type="entry name" value="ORC5_C"/>
    <property type="match status" value="1"/>
</dbReference>
<dbReference type="Pfam" id="PF21639">
    <property type="entry name" value="ORC5_lid"/>
    <property type="match status" value="1"/>
</dbReference>
<dbReference type="SUPFAM" id="SSF52540">
    <property type="entry name" value="P-loop containing nucleoside triphosphate hydrolases"/>
    <property type="match status" value="1"/>
</dbReference>
<proteinExistence type="evidence at protein level"/>
<protein>
    <recommendedName>
        <fullName>Origin recognition complex subunit 5</fullName>
    </recommendedName>
</protein>
<organism>
    <name type="scientific">Homo sapiens</name>
    <name type="common">Human</name>
    <dbReference type="NCBI Taxonomy" id="9606"/>
    <lineage>
        <taxon>Eukaryota</taxon>
        <taxon>Metazoa</taxon>
        <taxon>Chordata</taxon>
        <taxon>Craniata</taxon>
        <taxon>Vertebrata</taxon>
        <taxon>Euteleostomi</taxon>
        <taxon>Mammalia</taxon>
        <taxon>Eutheria</taxon>
        <taxon>Euarchontoglires</taxon>
        <taxon>Primates</taxon>
        <taxon>Haplorrhini</taxon>
        <taxon>Catarrhini</taxon>
        <taxon>Hominidae</taxon>
        <taxon>Homo</taxon>
    </lineage>
</organism>
<feature type="chain" id="PRO_0000127092" description="Origin recognition complex subunit 5">
    <location>
        <begin position="1"/>
        <end position="435"/>
    </location>
</feature>
<feature type="binding site" evidence="1">
    <location>
        <begin position="37"/>
        <end position="44"/>
    </location>
    <ligand>
        <name>ATP</name>
        <dbReference type="ChEBI" id="CHEBI:30616"/>
    </ligand>
</feature>
<feature type="splice variant" id="VSP_042037" description="In isoform 2." evidence="5">
    <original>LSAHTHVELPYYSKFILIAAYLASYNPARTDKRFFLKHHGKIKKTNFLKKHEKTSNHLLGPKPFPLDRLLAILYSIVDSRVAPTANIFSQITSLVTLQLLTLVGHDDQLDGPKYKCTVSLDFIRAIARTVNFDIIKYLYDFL</original>
    <variation>IRGSIETVTGDTSSANYQDTKVNTKEHSVRK</variation>
    <location>
        <begin position="294"/>
        <end position="435"/>
    </location>
</feature>
<feature type="sequence variant" id="VAR_011800" description="In dbSNP:rs1056677." evidence="4">
    <original>G</original>
    <variation>R</variation>
    <location>
        <position position="37"/>
    </location>
</feature>
<feature type="sequence variant" id="VAR_014524" description="In dbSNP:rs2307413.">
    <original>K</original>
    <variation>N</variation>
    <location>
        <position position="52"/>
    </location>
</feature>
<feature type="sequence variant" id="VAR_014525" description="In dbSNP:rs2307402.">
    <original>R</original>
    <variation>C</variation>
    <location>
        <position position="166"/>
    </location>
</feature>
<feature type="helix" evidence="8">
    <location>
        <begin position="13"/>
        <end position="22"/>
    </location>
</feature>
<feature type="strand" evidence="8">
    <location>
        <begin position="24"/>
        <end position="27"/>
    </location>
</feature>
<feature type="strand" evidence="8">
    <location>
        <begin position="31"/>
        <end position="36"/>
    </location>
</feature>
<feature type="strand" evidence="8">
    <location>
        <begin position="39"/>
        <end position="42"/>
    </location>
</feature>
<feature type="helix" evidence="8">
    <location>
        <begin position="43"/>
        <end position="53"/>
    </location>
</feature>
<feature type="strand" evidence="8">
    <location>
        <begin position="58"/>
        <end position="62"/>
    </location>
</feature>
<feature type="turn" evidence="8">
    <location>
        <begin position="63"/>
        <end position="65"/>
    </location>
</feature>
<feature type="helix" evidence="8">
    <location>
        <begin position="69"/>
        <end position="84"/>
    </location>
</feature>
<feature type="helix" evidence="8">
    <location>
        <begin position="99"/>
        <end position="110"/>
    </location>
</feature>
<feature type="strand" evidence="8">
    <location>
        <begin position="115"/>
        <end position="118"/>
    </location>
</feature>
<feature type="strand" evidence="8">
    <location>
        <begin position="120"/>
        <end position="126"/>
    </location>
</feature>
<feature type="helix" evidence="8">
    <location>
        <begin position="127"/>
        <end position="129"/>
    </location>
</feature>
<feature type="turn" evidence="8">
    <location>
        <begin position="131"/>
        <end position="133"/>
    </location>
</feature>
<feature type="helix" evidence="8">
    <location>
        <begin position="137"/>
        <end position="142"/>
    </location>
</feature>
<feature type="helix" evidence="8">
    <location>
        <begin position="144"/>
        <end position="148"/>
    </location>
</feature>
<feature type="strand" evidence="8">
    <location>
        <begin position="152"/>
        <end position="160"/>
    </location>
</feature>
<feature type="helix" evidence="8">
    <location>
        <begin position="162"/>
        <end position="164"/>
    </location>
</feature>
<feature type="strand" evidence="8">
    <location>
        <begin position="175"/>
        <end position="178"/>
    </location>
</feature>
<feature type="helix" evidence="8">
    <location>
        <begin position="184"/>
        <end position="191"/>
    </location>
</feature>
<feature type="turn" evidence="7">
    <location>
        <begin position="192"/>
        <end position="194"/>
    </location>
</feature>
<feature type="helix" evidence="8">
    <location>
        <begin position="201"/>
        <end position="215"/>
    </location>
</feature>
<feature type="turn" evidence="8">
    <location>
        <begin position="216"/>
        <end position="218"/>
    </location>
</feature>
<feature type="helix" evidence="8">
    <location>
        <begin position="222"/>
        <end position="236"/>
    </location>
</feature>
<feature type="helix" evidence="8">
    <location>
        <begin position="238"/>
        <end position="242"/>
    </location>
</feature>
<feature type="strand" evidence="8">
    <location>
        <begin position="243"/>
        <end position="245"/>
    </location>
</feature>
<feature type="helix" evidence="8">
    <location>
        <begin position="250"/>
        <end position="267"/>
    </location>
</feature>
<feature type="turn" evidence="8">
    <location>
        <begin position="268"/>
        <end position="271"/>
    </location>
</feature>
<feature type="helix" evidence="8">
    <location>
        <begin position="275"/>
        <end position="283"/>
    </location>
</feature>
<feature type="strand" evidence="8">
    <location>
        <begin position="294"/>
        <end position="296"/>
    </location>
</feature>
<feature type="helix" evidence="8">
    <location>
        <begin position="304"/>
        <end position="317"/>
    </location>
</feature>
<feature type="helix" evidence="8">
    <location>
        <begin position="321"/>
        <end position="323"/>
    </location>
</feature>
<feature type="helix" evidence="8">
    <location>
        <begin position="324"/>
        <end position="327"/>
    </location>
</feature>
<feature type="turn" evidence="9">
    <location>
        <begin position="350"/>
        <end position="352"/>
    </location>
</feature>
<feature type="helix" evidence="8">
    <location>
        <begin position="359"/>
        <end position="369"/>
    </location>
</feature>
<feature type="strand" evidence="8">
    <location>
        <begin position="370"/>
        <end position="372"/>
    </location>
</feature>
<feature type="helix" evidence="8">
    <location>
        <begin position="378"/>
        <end position="389"/>
    </location>
</feature>
<feature type="strand" evidence="8">
    <location>
        <begin position="392"/>
        <end position="395"/>
    </location>
</feature>
<feature type="strand" evidence="8">
    <location>
        <begin position="401"/>
        <end position="403"/>
    </location>
</feature>
<feature type="strand" evidence="8">
    <location>
        <begin position="407"/>
        <end position="409"/>
    </location>
</feature>
<feature type="helix" evidence="8">
    <location>
        <begin position="413"/>
        <end position="422"/>
    </location>
</feature>
<feature type="helix" evidence="8">
    <location>
        <begin position="428"/>
        <end position="431"/>
    </location>
</feature>
<name>ORC5_HUMAN</name>
<sequence length="435" mass="50283">MPHLENVVLCRESQVSILQSLFGERHHFSFPSIFIYGHTASGKTYVTQTLLKTLELPHVFVNCVECFTLRLLLEQILNKLNHLSSSEDGCSTEITCETFNDFVRLFKQVTTAENLKDQTVYIVLDKAEYLRDMEANLLPGFLRLQELADRNVTVLFLSEIVWEKFRPNTGCFEPFVLYFPDYSIGNLQKILSHDHPPEYSADFYAAYINILLGVFYTVCRDLKELRHLAVLNFPKYCEPVVKGEASERDTRKLWRNIEPHLKKAMQTVYLREISSSQWEKLQKDDTDPGQLKGLSAHTHVELPYYSKFILIAAYLASYNPARTDKRFFLKHHGKIKKTNFLKKHEKTSNHLLGPKPFPLDRLLAILYSIVDSRVAPTANIFSQITSLVTLQLLTLVGHDDQLDGPKYKCTVSLDFIRAIARTVNFDIIKYLYDFL</sequence>
<gene>
    <name type="primary">ORC5</name>
    <name type="synonym">ORC5L</name>
</gene>
<comment type="function">
    <text evidence="3">Component of the origin recognition complex (ORC) that binds origins of replication. DNA-binding is ATP-dependent. The specific DNA sequences that define origins of replication have not been identified yet. ORC is required to assemble the pre-replication complex necessary to initiate DNA replication.</text>
</comment>
<comment type="subunit">
    <text evidence="2">Component of ORC, a complex composed of at least 6 subunits: ORC1, ORC2, ORC3, ORC4, ORC5 and ORC6. ORC is regulated in a cell-cycle dependent manner. It is sequentially assembled at the exit from anaphase of mitosis and disassembled as cells enter S phase.</text>
</comment>
<comment type="interaction">
    <interactant intactId="EBI-374928">
        <id>O43913</id>
    </interactant>
    <interactant intactId="EBI-374847">
        <id>Q13415</id>
        <label>ORC1</label>
    </interactant>
    <organismsDiffer>false</organismsDiffer>
    <experiments>11</experiments>
</comment>
<comment type="interaction">
    <interactant intactId="EBI-374928">
        <id>O43913</id>
    </interactant>
    <interactant intactId="EBI-374957">
        <id>Q13416</id>
        <label>ORC2</label>
    </interactant>
    <organismsDiffer>false</organismsDiffer>
    <experiments>15</experiments>
</comment>
<comment type="interaction">
    <interactant intactId="EBI-374928">
        <id>O43913</id>
    </interactant>
    <interactant intactId="EBI-374916">
        <id>Q9UBD5</id>
        <label>ORC3</label>
    </interactant>
    <organismsDiffer>false</organismsDiffer>
    <experiments>15</experiments>
</comment>
<comment type="interaction">
    <interactant intactId="EBI-374928">
        <id>O43913</id>
    </interactant>
    <interactant intactId="EBI-374889">
        <id>O43929</id>
        <label>ORC4</label>
    </interactant>
    <organismsDiffer>false</organismsDiffer>
    <experiments>2</experiments>
</comment>
<comment type="subcellular location">
    <subcellularLocation>
        <location evidence="3">Nucleus</location>
    </subcellularLocation>
    <subcellularLocation>
        <location evidence="3">Chromosome</location>
    </subcellularLocation>
</comment>
<comment type="alternative products">
    <event type="alternative splicing"/>
    <isoform>
        <id>O43913-1</id>
        <name>1</name>
        <sequence type="displayed"/>
    </isoform>
    <isoform>
        <id>O43913-2</id>
        <name>2</name>
        <name>ORC5T</name>
        <sequence type="described" ref="VSP_042037"/>
    </isoform>
</comment>
<comment type="tissue specificity">
    <text evidence="4">Abundant in spleen, ovary, prostate, testis, and colon mucosa.</text>
</comment>
<comment type="PTM">
    <text evidence="3">Multi-mono-ubiquitinated by OBI1; ubiquitination is important for efficient DNA replication origin site activation. Ubiquitination levels are low in mitotic and early G1-phAse cells and are induced in late G1-/early S-phase, peaking in S-phase and decrease toward the end of the cell cycle.</text>
</comment>
<comment type="miscellaneous">
    <molecule>Isoform 2</molecule>
    <text evidence="6">Does not interact with ORC2.</text>
</comment>
<comment type="similarity">
    <text evidence="6">Belongs to the ORC5 family.</text>
</comment>
<reference key="1">
    <citation type="journal article" date="1998" name="J. Biol. Chem.">
        <title>The Orc4p and Orc5p subunits of the Xenopus and human origin recognition complex are related to Orc1p and Cdc6p.</title>
        <authorList>
            <person name="Tugal T."/>
            <person name="Zou-Yang X.H."/>
            <person name="Gavin K."/>
            <person name="Pappin D."/>
            <person name="Canas B."/>
            <person name="Kobayashi R."/>
            <person name="Hunt T."/>
            <person name="Stillman B."/>
        </authorList>
    </citation>
    <scope>NUCLEOTIDE SEQUENCE [MRNA] (ISOFORM 1)</scope>
</reference>
<reference key="2">
    <citation type="journal article" date="1997" name="Genomics">
        <title>Isolation of human and fission yeast homologues of the budding yeast origin recognition complex subunit ORC5: human homologue (ORC5L) maps to 7q22.</title>
        <authorList>
            <person name="Ishiai M."/>
            <person name="Dean F.B."/>
            <person name="Okumura K."/>
            <person name="Abe M."/>
            <person name="Moon K.-Y."/>
            <person name="Amin A.A."/>
            <person name="Kagotani K."/>
            <person name="Taguchi H."/>
            <person name="Murakami Y."/>
            <person name="Hanaoka F."/>
            <person name="O'Donnell M."/>
            <person name="Hurwitz J."/>
            <person name="Eki T."/>
        </authorList>
    </citation>
    <scope>NUCLEOTIDE SEQUENCE [MRNA] (ISOFORM 1)</scope>
</reference>
<reference key="3">
    <citation type="journal article" date="1998" name="J. Biol. Chem.">
        <title>ORC5L, a new member of the human origin recognition complex, is deleted in uterine leiomyomas and malignant myeloid diseases.</title>
        <authorList>
            <person name="Quintana D.G."/>
            <person name="Thome K.C."/>
            <person name="Hou Z.-H."/>
            <person name="Ligon A.H."/>
            <person name="Morton C.C."/>
            <person name="Dutta A."/>
        </authorList>
    </citation>
    <scope>NUCLEOTIDE SEQUENCE [MRNA] (ISOFORMS 1 AND 2)</scope>
    <scope>ALTERNATIVE SPLICING</scope>
    <scope>TISSUE SPECIFICITY</scope>
    <scope>VARIANT ARG-37</scope>
</reference>
<reference key="4">
    <citation type="journal article" date="2003" name="Nature">
        <title>The DNA sequence of human chromosome 7.</title>
        <authorList>
            <person name="Hillier L.W."/>
            <person name="Fulton R.S."/>
            <person name="Fulton L.A."/>
            <person name="Graves T.A."/>
            <person name="Pepin K.H."/>
            <person name="Wagner-McPherson C."/>
            <person name="Layman D."/>
            <person name="Maas J."/>
            <person name="Jaeger S."/>
            <person name="Walker R."/>
            <person name="Wylie K."/>
            <person name="Sekhon M."/>
            <person name="Becker M.C."/>
            <person name="O'Laughlin M.D."/>
            <person name="Schaller M.E."/>
            <person name="Fewell G.A."/>
            <person name="Delehaunty K.D."/>
            <person name="Miner T.L."/>
            <person name="Nash W.E."/>
            <person name="Cordes M."/>
            <person name="Du H."/>
            <person name="Sun H."/>
            <person name="Edwards J."/>
            <person name="Bradshaw-Cordum H."/>
            <person name="Ali J."/>
            <person name="Andrews S."/>
            <person name="Isak A."/>
            <person name="Vanbrunt A."/>
            <person name="Nguyen C."/>
            <person name="Du F."/>
            <person name="Lamar B."/>
            <person name="Courtney L."/>
            <person name="Kalicki J."/>
            <person name="Ozersky P."/>
            <person name="Bielicki L."/>
            <person name="Scott K."/>
            <person name="Holmes A."/>
            <person name="Harkins R."/>
            <person name="Harris A."/>
            <person name="Strong C.M."/>
            <person name="Hou S."/>
            <person name="Tomlinson C."/>
            <person name="Dauphin-Kohlberg S."/>
            <person name="Kozlowicz-Reilly A."/>
            <person name="Leonard S."/>
            <person name="Rohlfing T."/>
            <person name="Rock S.M."/>
            <person name="Tin-Wollam A.-M."/>
            <person name="Abbott A."/>
            <person name="Minx P."/>
            <person name="Maupin R."/>
            <person name="Strowmatt C."/>
            <person name="Latreille P."/>
            <person name="Miller N."/>
            <person name="Johnson D."/>
            <person name="Murray J."/>
            <person name="Woessner J.P."/>
            <person name="Wendl M.C."/>
            <person name="Yang S.-P."/>
            <person name="Schultz B.R."/>
            <person name="Wallis J.W."/>
            <person name="Spieth J."/>
            <person name="Bieri T.A."/>
            <person name="Nelson J.O."/>
            <person name="Berkowicz N."/>
            <person name="Wohldmann P.E."/>
            <person name="Cook L.L."/>
            <person name="Hickenbotham M.T."/>
            <person name="Eldred J."/>
            <person name="Williams D."/>
            <person name="Bedell J.A."/>
            <person name="Mardis E.R."/>
            <person name="Clifton S.W."/>
            <person name="Chissoe S.L."/>
            <person name="Marra M.A."/>
            <person name="Raymond C."/>
            <person name="Haugen E."/>
            <person name="Gillett W."/>
            <person name="Zhou Y."/>
            <person name="James R."/>
            <person name="Phelps K."/>
            <person name="Iadanoto S."/>
            <person name="Bubb K."/>
            <person name="Simms E."/>
            <person name="Levy R."/>
            <person name="Clendenning J."/>
            <person name="Kaul R."/>
            <person name="Kent W.J."/>
            <person name="Furey T.S."/>
            <person name="Baertsch R.A."/>
            <person name="Brent M.R."/>
            <person name="Keibler E."/>
            <person name="Flicek P."/>
            <person name="Bork P."/>
            <person name="Suyama M."/>
            <person name="Bailey J.A."/>
            <person name="Portnoy M.E."/>
            <person name="Torrents D."/>
            <person name="Chinwalla A.T."/>
            <person name="Gish W.R."/>
            <person name="Eddy S.R."/>
            <person name="McPherson J.D."/>
            <person name="Olson M.V."/>
            <person name="Eichler E.E."/>
            <person name="Green E.D."/>
            <person name="Waterston R.H."/>
            <person name="Wilson R.K."/>
        </authorList>
    </citation>
    <scope>NUCLEOTIDE SEQUENCE [LARGE SCALE GENOMIC DNA]</scope>
</reference>
<reference key="5">
    <citation type="journal article" date="2003" name="Science">
        <title>Human chromosome 7: DNA sequence and biology.</title>
        <authorList>
            <person name="Scherer S.W."/>
            <person name="Cheung J."/>
            <person name="MacDonald J.R."/>
            <person name="Osborne L.R."/>
            <person name="Nakabayashi K."/>
            <person name="Herbrick J.-A."/>
            <person name="Carson A.R."/>
            <person name="Parker-Katiraee L."/>
            <person name="Skaug J."/>
            <person name="Khaja R."/>
            <person name="Zhang J."/>
            <person name="Hudek A.K."/>
            <person name="Li M."/>
            <person name="Haddad M."/>
            <person name="Duggan G.E."/>
            <person name="Fernandez B.A."/>
            <person name="Kanematsu E."/>
            <person name="Gentles S."/>
            <person name="Christopoulos C.C."/>
            <person name="Choufani S."/>
            <person name="Kwasnicka D."/>
            <person name="Zheng X.H."/>
            <person name="Lai Z."/>
            <person name="Nusskern D.R."/>
            <person name="Zhang Q."/>
            <person name="Gu Z."/>
            <person name="Lu F."/>
            <person name="Zeesman S."/>
            <person name="Nowaczyk M.J."/>
            <person name="Teshima I."/>
            <person name="Chitayat D."/>
            <person name="Shuman C."/>
            <person name="Weksberg R."/>
            <person name="Zackai E.H."/>
            <person name="Grebe T.A."/>
            <person name="Cox S.R."/>
            <person name="Kirkpatrick S.J."/>
            <person name="Rahman N."/>
            <person name="Friedman J.M."/>
            <person name="Heng H.H.Q."/>
            <person name="Pelicci P.G."/>
            <person name="Lo-Coco F."/>
            <person name="Belloni E."/>
            <person name="Shaffer L.G."/>
            <person name="Pober B."/>
            <person name="Morton C.C."/>
            <person name="Gusella J.F."/>
            <person name="Bruns G.A.P."/>
            <person name="Korf B.R."/>
            <person name="Quade B.J."/>
            <person name="Ligon A.H."/>
            <person name="Ferguson H."/>
            <person name="Higgins A.W."/>
            <person name="Leach N.T."/>
            <person name="Herrick S.R."/>
            <person name="Lemyre E."/>
            <person name="Farra C.G."/>
            <person name="Kim H.-G."/>
            <person name="Summers A.M."/>
            <person name="Gripp K.W."/>
            <person name="Roberts W."/>
            <person name="Szatmari P."/>
            <person name="Winsor E.J.T."/>
            <person name="Grzeschik K.-H."/>
            <person name="Teebi A."/>
            <person name="Minassian B.A."/>
            <person name="Kere J."/>
            <person name="Armengol L."/>
            <person name="Pujana M.A."/>
            <person name="Estivill X."/>
            <person name="Wilson M.D."/>
            <person name="Koop B.F."/>
            <person name="Tosi S."/>
            <person name="Moore G.E."/>
            <person name="Boright A.P."/>
            <person name="Zlotorynski E."/>
            <person name="Kerem B."/>
            <person name="Kroisel P.M."/>
            <person name="Petek E."/>
            <person name="Oscier D.G."/>
            <person name="Mould S.J."/>
            <person name="Doehner H."/>
            <person name="Doehner K."/>
            <person name="Rommens J.M."/>
            <person name="Vincent J.B."/>
            <person name="Venter J.C."/>
            <person name="Li P.W."/>
            <person name="Mural R.J."/>
            <person name="Adams M.D."/>
            <person name="Tsui L.-C."/>
        </authorList>
    </citation>
    <scope>NUCLEOTIDE SEQUENCE [LARGE SCALE GENOMIC DNA]</scope>
</reference>
<reference key="6">
    <citation type="submission" date="2005-07" db="EMBL/GenBank/DDBJ databases">
        <authorList>
            <person name="Mural R.J."/>
            <person name="Istrail S."/>
            <person name="Sutton G."/>
            <person name="Florea L."/>
            <person name="Halpern A.L."/>
            <person name="Mobarry C.M."/>
            <person name="Lippert R."/>
            <person name="Walenz B."/>
            <person name="Shatkay H."/>
            <person name="Dew I."/>
            <person name="Miller J.R."/>
            <person name="Flanigan M.J."/>
            <person name="Edwards N.J."/>
            <person name="Bolanos R."/>
            <person name="Fasulo D."/>
            <person name="Halldorsson B.V."/>
            <person name="Hannenhalli S."/>
            <person name="Turner R."/>
            <person name="Yooseph S."/>
            <person name="Lu F."/>
            <person name="Nusskern D.R."/>
            <person name="Shue B.C."/>
            <person name="Zheng X.H."/>
            <person name="Zhong F."/>
            <person name="Delcher A.L."/>
            <person name="Huson D.H."/>
            <person name="Kravitz S.A."/>
            <person name="Mouchard L."/>
            <person name="Reinert K."/>
            <person name="Remington K.A."/>
            <person name="Clark A.G."/>
            <person name="Waterman M.S."/>
            <person name="Eichler E.E."/>
            <person name="Adams M.D."/>
            <person name="Hunkapiller M.W."/>
            <person name="Myers E.W."/>
            <person name="Venter J.C."/>
        </authorList>
    </citation>
    <scope>NUCLEOTIDE SEQUENCE [LARGE SCALE GENOMIC DNA]</scope>
</reference>
<reference key="7">
    <citation type="journal article" date="2004" name="Genome Res.">
        <title>The status, quality, and expansion of the NIH full-length cDNA project: the Mammalian Gene Collection (MGC).</title>
        <authorList>
            <consortium name="The MGC Project Team"/>
        </authorList>
    </citation>
    <scope>NUCLEOTIDE SEQUENCE [LARGE SCALE MRNA] (ISOFORM 1)</scope>
    <source>
        <tissue>Uterus</tissue>
    </source>
</reference>
<reference key="8">
    <citation type="journal article" date="2003" name="J. Biol. Chem.">
        <title>The ORC1 cycle in human cells: II. Dynamic changes in the human ORC complex during the cell cycle.</title>
        <authorList>
            <person name="Ohta S."/>
            <person name="Tatsumi Y."/>
            <person name="Fujita M."/>
            <person name="Tsurimoto T."/>
            <person name="Obuse C."/>
        </authorList>
    </citation>
    <scope>IDENTIFICATION IN THE ORC COMPLEX</scope>
    <scope>IDENTIFICATION BY MASS SPECTROMETRY</scope>
    <scope>ASSEMBLY OF THE ORC COMPLEX</scope>
</reference>
<reference key="9">
    <citation type="journal article" date="2007" name="J. Biol. Chem.">
        <title>ATP-dependent assembly of the human origin recognition complex.</title>
        <authorList>
            <person name="Siddiqui K."/>
            <person name="Stillman B."/>
        </authorList>
    </citation>
    <scope>RECONSTITUTION OF THE ORC COMPLEX</scope>
    <scope>DISASSEMBLY OF THE ORC COMPLEX</scope>
</reference>
<reference key="10">
    <citation type="journal article" date="2011" name="BMC Syst. Biol.">
        <title>Initial characterization of the human central proteome.</title>
        <authorList>
            <person name="Burkard T.R."/>
            <person name="Planyavsky M."/>
            <person name="Kaupe I."/>
            <person name="Breitwieser F.P."/>
            <person name="Buerckstuemmer T."/>
            <person name="Bennett K.L."/>
            <person name="Superti-Furga G."/>
            <person name="Colinge J."/>
        </authorList>
    </citation>
    <scope>IDENTIFICATION BY MASS SPECTROMETRY [LARGE SCALE ANALYSIS]</scope>
</reference>
<reference key="11">
    <citation type="journal article" date="2019" name="Nat. Commun.">
        <title>The ORC ubiquitin ligase OBI1 promotes DNA replication origin firing.</title>
        <authorList>
            <person name="Coulombe P."/>
            <person name="Nassar J."/>
            <person name="Peiffer I."/>
            <person name="Stanojcic S."/>
            <person name="Sterkers Y."/>
            <person name="Delamarre A."/>
            <person name="Bocquet S."/>
            <person name="Mechali M."/>
        </authorList>
    </citation>
    <scope>FUNCTION</scope>
    <scope>UBIQUITINATION</scope>
    <scope>SUBCELLULAR LOCATION</scope>
</reference>
<evidence type="ECO:0000255" key="1"/>
<evidence type="ECO:0000269" key="2">
    <source>
    </source>
</evidence>
<evidence type="ECO:0000269" key="3">
    <source>
    </source>
</evidence>
<evidence type="ECO:0000269" key="4">
    <source>
    </source>
</evidence>
<evidence type="ECO:0000303" key="5">
    <source>
    </source>
</evidence>
<evidence type="ECO:0000305" key="6"/>
<evidence type="ECO:0007829" key="7">
    <source>
        <dbReference type="PDB" id="5UJ7"/>
    </source>
</evidence>
<evidence type="ECO:0007829" key="8">
    <source>
        <dbReference type="PDB" id="7JPO"/>
    </source>
</evidence>
<evidence type="ECO:0007829" key="9">
    <source>
        <dbReference type="PDB" id="7JPQ"/>
    </source>
</evidence>
<keyword id="KW-0002">3D-structure</keyword>
<keyword id="KW-0025">Alternative splicing</keyword>
<keyword id="KW-0067">ATP-binding</keyword>
<keyword id="KW-0158">Chromosome</keyword>
<keyword id="KW-0235">DNA replication</keyword>
<keyword id="KW-0547">Nucleotide-binding</keyword>
<keyword id="KW-0539">Nucleus</keyword>
<keyword id="KW-1267">Proteomics identification</keyword>
<keyword id="KW-1185">Reference proteome</keyword>
<keyword id="KW-0832">Ubl conjugation</keyword>